<comment type="function">
    <text evidence="1">Protein transport. Probably involved in vesicular traffic (By similarity).</text>
</comment>
<comment type="subcellular location">
    <subcellularLocation>
        <location evidence="5">Cell membrane</location>
        <topology evidence="5">Lipid-anchor</topology>
        <orientation evidence="5">Cytoplasmic side</orientation>
    </subcellularLocation>
</comment>
<comment type="similarity">
    <text evidence="5">Belongs to the small GTPase superfamily. Rab family.</text>
</comment>
<protein>
    <recommendedName>
        <fullName>GTP-binding protein yptV4</fullName>
    </recommendedName>
    <alternativeName>
        <fullName>RAB2 homolog</fullName>
    </alternativeName>
</protein>
<gene>
    <name type="primary">YPTV4</name>
</gene>
<accession>P36863</accession>
<dbReference type="EMBL" id="L08130">
    <property type="protein sequence ID" value="AAA34253.1"/>
    <property type="molecule type" value="Genomic_DNA"/>
</dbReference>
<dbReference type="PIR" id="S36367">
    <property type="entry name" value="S36367"/>
</dbReference>
<dbReference type="SMR" id="P36863"/>
<dbReference type="KEGG" id="vcn:VOLCADRAFT_106534"/>
<dbReference type="OMA" id="QISYNEA"/>
<dbReference type="GO" id="GO:0005886">
    <property type="term" value="C:plasma membrane"/>
    <property type="evidence" value="ECO:0007669"/>
    <property type="project" value="UniProtKB-SubCell"/>
</dbReference>
<dbReference type="GO" id="GO:0005525">
    <property type="term" value="F:GTP binding"/>
    <property type="evidence" value="ECO:0007669"/>
    <property type="project" value="UniProtKB-KW"/>
</dbReference>
<dbReference type="GO" id="GO:0003924">
    <property type="term" value="F:GTPase activity"/>
    <property type="evidence" value="ECO:0007669"/>
    <property type="project" value="InterPro"/>
</dbReference>
<dbReference type="GO" id="GO:0015031">
    <property type="term" value="P:protein transport"/>
    <property type="evidence" value="ECO:0007669"/>
    <property type="project" value="UniProtKB-KW"/>
</dbReference>
<dbReference type="CDD" id="cd01866">
    <property type="entry name" value="Rab2"/>
    <property type="match status" value="1"/>
</dbReference>
<dbReference type="FunFam" id="3.40.50.300:FF:000263">
    <property type="entry name" value="Ras-related protein RABB1c"/>
    <property type="match status" value="1"/>
</dbReference>
<dbReference type="Gene3D" id="3.40.50.300">
    <property type="entry name" value="P-loop containing nucleotide triphosphate hydrolases"/>
    <property type="match status" value="1"/>
</dbReference>
<dbReference type="InterPro" id="IPR027417">
    <property type="entry name" value="P-loop_NTPase"/>
</dbReference>
<dbReference type="InterPro" id="IPR050209">
    <property type="entry name" value="Rab_GTPases_membrane_traffic"/>
</dbReference>
<dbReference type="InterPro" id="IPR005225">
    <property type="entry name" value="Small_GTP-bd"/>
</dbReference>
<dbReference type="InterPro" id="IPR001806">
    <property type="entry name" value="Small_GTPase"/>
</dbReference>
<dbReference type="NCBIfam" id="TIGR00231">
    <property type="entry name" value="small_GTP"/>
    <property type="match status" value="1"/>
</dbReference>
<dbReference type="PANTHER" id="PTHR47979">
    <property type="entry name" value="DRAB11-RELATED"/>
    <property type="match status" value="1"/>
</dbReference>
<dbReference type="Pfam" id="PF00071">
    <property type="entry name" value="Ras"/>
    <property type="match status" value="1"/>
</dbReference>
<dbReference type="PRINTS" id="PR00449">
    <property type="entry name" value="RASTRNSFRMNG"/>
</dbReference>
<dbReference type="SMART" id="SM00175">
    <property type="entry name" value="RAB"/>
    <property type="match status" value="1"/>
</dbReference>
<dbReference type="SMART" id="SM00176">
    <property type="entry name" value="RAN"/>
    <property type="match status" value="1"/>
</dbReference>
<dbReference type="SMART" id="SM00173">
    <property type="entry name" value="RAS"/>
    <property type="match status" value="1"/>
</dbReference>
<dbReference type="SMART" id="SM00174">
    <property type="entry name" value="RHO"/>
    <property type="match status" value="1"/>
</dbReference>
<dbReference type="SUPFAM" id="SSF52540">
    <property type="entry name" value="P-loop containing nucleoside triphosphate hydrolases"/>
    <property type="match status" value="1"/>
</dbReference>
<dbReference type="PROSITE" id="PS51419">
    <property type="entry name" value="RAB"/>
    <property type="match status" value="1"/>
</dbReference>
<evidence type="ECO:0000250" key="1"/>
<evidence type="ECO:0000250" key="2">
    <source>
        <dbReference type="UniProtKB" id="P61019"/>
    </source>
</evidence>
<evidence type="ECO:0000250" key="3">
    <source>
        <dbReference type="UniProtKB" id="P62820"/>
    </source>
</evidence>
<evidence type="ECO:0000256" key="4">
    <source>
        <dbReference type="SAM" id="MobiDB-lite"/>
    </source>
</evidence>
<evidence type="ECO:0000305" key="5"/>
<organism>
    <name type="scientific">Volvox carteri</name>
    <name type="common">Green alga</name>
    <dbReference type="NCBI Taxonomy" id="3067"/>
    <lineage>
        <taxon>Eukaryota</taxon>
        <taxon>Viridiplantae</taxon>
        <taxon>Chlorophyta</taxon>
        <taxon>core chlorophytes</taxon>
        <taxon>Chlorophyceae</taxon>
        <taxon>CS clade</taxon>
        <taxon>Chlamydomonadales</taxon>
        <taxon>Volvocaceae</taxon>
        <taxon>Volvox</taxon>
    </lineage>
</organism>
<name>YPTV4_VOLCA</name>
<keyword id="KW-1003">Cell membrane</keyword>
<keyword id="KW-0342">GTP-binding</keyword>
<keyword id="KW-0449">Lipoprotein</keyword>
<keyword id="KW-0472">Membrane</keyword>
<keyword id="KW-0547">Nucleotide-binding</keyword>
<keyword id="KW-0636">Prenylation</keyword>
<keyword id="KW-0653">Protein transport</keyword>
<keyword id="KW-0813">Transport</keyword>
<reference key="1">
    <citation type="journal article" date="1993" name="Curr. Genet.">
        <title>Structure, expression, and phylogenetic relationships of a family of ypt genes encoding small G-proteins in the green alga Volvox carteri.</title>
        <authorList>
            <person name="Fabry S."/>
            <person name="Jacobsen A."/>
            <person name="Huber H."/>
            <person name="Palme K."/>
            <person name="Schmitt R."/>
        </authorList>
    </citation>
    <scope>NUCLEOTIDE SEQUENCE [GENOMIC DNA]</scope>
    <source>
        <strain>f. Nagariensis / HK10</strain>
    </source>
</reference>
<feature type="chain" id="PRO_0000121303" description="GTP-binding protein yptV4">
    <location>
        <begin position="1"/>
        <end position="213"/>
    </location>
</feature>
<feature type="region of interest" description="Disordered" evidence="4">
    <location>
        <begin position="194"/>
        <end position="213"/>
    </location>
</feature>
<feature type="short sequence motif" description="Effector region" evidence="5">
    <location>
        <begin position="35"/>
        <end position="43"/>
    </location>
</feature>
<feature type="compositionally biased region" description="Basic and acidic residues" evidence="4">
    <location>
        <begin position="202"/>
        <end position="213"/>
    </location>
</feature>
<feature type="binding site" evidence="2">
    <location>
        <begin position="13"/>
        <end position="21"/>
    </location>
    <ligand>
        <name>GTP</name>
        <dbReference type="ChEBI" id="CHEBI:37565"/>
    </ligand>
</feature>
<feature type="binding site" evidence="3">
    <location>
        <begin position="61"/>
        <end position="65"/>
    </location>
    <ligand>
        <name>GTP</name>
        <dbReference type="ChEBI" id="CHEBI:37565"/>
    </ligand>
</feature>
<feature type="binding site" evidence="2">
    <location>
        <begin position="119"/>
        <end position="122"/>
    </location>
    <ligand>
        <name>GTP</name>
        <dbReference type="ChEBI" id="CHEBI:37565"/>
    </ligand>
</feature>
<feature type="binding site" evidence="2">
    <location>
        <begin position="149"/>
        <end position="151"/>
    </location>
    <ligand>
        <name>GTP</name>
        <dbReference type="ChEBI" id="CHEBI:37565"/>
    </ligand>
</feature>
<feature type="lipid moiety-binding region" description="S-geranylgeranyl cysteine" evidence="1">
    <location>
        <position position="212"/>
    </location>
</feature>
<feature type="lipid moiety-binding region" description="S-geranylgeranyl cysteine" evidence="1">
    <location>
        <position position="213"/>
    </location>
</feature>
<proteinExistence type="inferred from homology"/>
<sequence>MSYAYLFKYIIIGDTGVGKSCLLLQFTDKRFQPVHDLTIGVEFGARMINIDGKQIKLQIWDTAGQESFRSITRSYYRGAAGALLVYDITRRETFNHLASWLEDARQHANPNMTIMLIGNKCDLTHRRAVTTEEGEQFAKEHGLIFLETSARTAHNVEEAFINTAKEIYKKIQDGVFDVSNESYGIKVGYGAGNAGPQAAKPGEGDARKSSSCC</sequence>